<reference key="1">
    <citation type="journal article" date="2001" name="J. Bacteriol.">
        <title>Genome of the bacterium Streptococcus pneumoniae strain R6.</title>
        <authorList>
            <person name="Hoskins J."/>
            <person name="Alborn W.E. Jr."/>
            <person name="Arnold J."/>
            <person name="Blaszczak L.C."/>
            <person name="Burgett S."/>
            <person name="DeHoff B.S."/>
            <person name="Estrem S.T."/>
            <person name="Fritz L."/>
            <person name="Fu D.-J."/>
            <person name="Fuller W."/>
            <person name="Geringer C."/>
            <person name="Gilmour R."/>
            <person name="Glass J.S."/>
            <person name="Khoja H."/>
            <person name="Kraft A.R."/>
            <person name="Lagace R.E."/>
            <person name="LeBlanc D.J."/>
            <person name="Lee L.N."/>
            <person name="Lefkowitz E.J."/>
            <person name="Lu J."/>
            <person name="Matsushima P."/>
            <person name="McAhren S.M."/>
            <person name="McHenney M."/>
            <person name="McLeaster K."/>
            <person name="Mundy C.W."/>
            <person name="Nicas T.I."/>
            <person name="Norris F.H."/>
            <person name="O'Gara M."/>
            <person name="Peery R.B."/>
            <person name="Robertson G.T."/>
            <person name="Rockey P."/>
            <person name="Sun P.-M."/>
            <person name="Winkler M.E."/>
            <person name="Yang Y."/>
            <person name="Young-Bellido M."/>
            <person name="Zhao G."/>
            <person name="Zook C.A."/>
            <person name="Baltz R.H."/>
            <person name="Jaskunas S.R."/>
            <person name="Rosteck P.R. Jr."/>
            <person name="Skatrud P.L."/>
            <person name="Glass J.I."/>
        </authorList>
    </citation>
    <scope>NUCLEOTIDE SEQUENCE [LARGE SCALE GENOMIC DNA]</scope>
    <source>
        <strain>ATCC BAA-255 / R6</strain>
    </source>
</reference>
<keyword id="KW-1185">Reference proteome</keyword>
<keyword id="KW-0694">RNA-binding</keyword>
<keyword id="KW-0804">Transcription</keyword>
<keyword id="KW-0889">Transcription antitermination</keyword>
<keyword id="KW-0805">Transcription regulation</keyword>
<protein>
    <recommendedName>
        <fullName evidence="1">Transcription antitermination protein NusB</fullName>
    </recommendedName>
    <alternativeName>
        <fullName evidence="1">Antitermination factor NusB</fullName>
    </alternativeName>
</protein>
<dbReference type="EMBL" id="AE007317">
    <property type="protein sequence ID" value="AAK99194.1"/>
    <property type="status" value="ALT_INIT"/>
    <property type="molecule type" value="Genomic_DNA"/>
</dbReference>
<dbReference type="PIR" id="F97920">
    <property type="entry name" value="F97920"/>
</dbReference>
<dbReference type="RefSeq" id="NP_357984.1">
    <property type="nucleotide sequence ID" value="NC_003098.1"/>
</dbReference>
<dbReference type="RefSeq" id="WP_000203654.1">
    <property type="nucleotide sequence ID" value="NC_003098.1"/>
</dbReference>
<dbReference type="SMR" id="P65583"/>
<dbReference type="STRING" id="171101.spr0390"/>
<dbReference type="GeneID" id="45652116"/>
<dbReference type="KEGG" id="spr:spr0390"/>
<dbReference type="PATRIC" id="fig|171101.6.peg.433"/>
<dbReference type="eggNOG" id="COG0781">
    <property type="taxonomic scope" value="Bacteria"/>
</dbReference>
<dbReference type="HOGENOM" id="CLU_087843_3_2_9"/>
<dbReference type="Proteomes" id="UP000000586">
    <property type="component" value="Chromosome"/>
</dbReference>
<dbReference type="GO" id="GO:0005829">
    <property type="term" value="C:cytosol"/>
    <property type="evidence" value="ECO:0000318"/>
    <property type="project" value="GO_Central"/>
</dbReference>
<dbReference type="GO" id="GO:0003723">
    <property type="term" value="F:RNA binding"/>
    <property type="evidence" value="ECO:0007669"/>
    <property type="project" value="UniProtKB-UniRule"/>
</dbReference>
<dbReference type="GO" id="GO:0006353">
    <property type="term" value="P:DNA-templated transcription termination"/>
    <property type="evidence" value="ECO:0007669"/>
    <property type="project" value="UniProtKB-UniRule"/>
</dbReference>
<dbReference type="GO" id="GO:0031564">
    <property type="term" value="P:transcription antitermination"/>
    <property type="evidence" value="ECO:0007669"/>
    <property type="project" value="UniProtKB-KW"/>
</dbReference>
<dbReference type="FunFam" id="1.10.940.10:FF:000008">
    <property type="entry name" value="Transcription antitermination protein NusB"/>
    <property type="match status" value="1"/>
</dbReference>
<dbReference type="Gene3D" id="1.10.940.10">
    <property type="entry name" value="NusB-like"/>
    <property type="match status" value="1"/>
</dbReference>
<dbReference type="HAMAP" id="MF_00073">
    <property type="entry name" value="NusB"/>
    <property type="match status" value="1"/>
</dbReference>
<dbReference type="InterPro" id="IPR035926">
    <property type="entry name" value="NusB-like_sf"/>
</dbReference>
<dbReference type="InterPro" id="IPR011605">
    <property type="entry name" value="NusB_fam"/>
</dbReference>
<dbReference type="InterPro" id="IPR006027">
    <property type="entry name" value="NusB_RsmB_TIM44"/>
</dbReference>
<dbReference type="NCBIfam" id="TIGR01951">
    <property type="entry name" value="nusB"/>
    <property type="match status" value="1"/>
</dbReference>
<dbReference type="NCBIfam" id="NF001223">
    <property type="entry name" value="PRK00202.1-1"/>
    <property type="match status" value="1"/>
</dbReference>
<dbReference type="PANTHER" id="PTHR11078:SF3">
    <property type="entry name" value="ANTITERMINATION NUSB DOMAIN-CONTAINING PROTEIN"/>
    <property type="match status" value="1"/>
</dbReference>
<dbReference type="PANTHER" id="PTHR11078">
    <property type="entry name" value="N UTILIZATION SUBSTANCE PROTEIN B-RELATED"/>
    <property type="match status" value="1"/>
</dbReference>
<dbReference type="Pfam" id="PF01029">
    <property type="entry name" value="NusB"/>
    <property type="match status" value="1"/>
</dbReference>
<dbReference type="SUPFAM" id="SSF48013">
    <property type="entry name" value="NusB-like"/>
    <property type="match status" value="1"/>
</dbReference>
<organism>
    <name type="scientific">Streptococcus pneumoniae (strain ATCC BAA-255 / R6)</name>
    <dbReference type="NCBI Taxonomy" id="171101"/>
    <lineage>
        <taxon>Bacteria</taxon>
        <taxon>Bacillati</taxon>
        <taxon>Bacillota</taxon>
        <taxon>Bacilli</taxon>
        <taxon>Lactobacillales</taxon>
        <taxon>Streptococcaceae</taxon>
        <taxon>Streptococcus</taxon>
    </lineage>
</organism>
<sequence>MTSPLLESRRQLRKCAFQALMSLEFGTDVETACRFAYTHDREDTDVQLPAFLIDLVSGVQAKKEELDKQITQHLKAGWTIERLTLVERNLLRLGVFEITSFDTPQLVAVNEAIELAKDFSDQKSARFINGLLSQFVTEEQ</sequence>
<evidence type="ECO:0000255" key="1">
    <source>
        <dbReference type="HAMAP-Rule" id="MF_00073"/>
    </source>
</evidence>
<evidence type="ECO:0000305" key="2"/>
<feature type="chain" id="PRO_0000176591" description="Transcription antitermination protein NusB">
    <location>
        <begin position="1"/>
        <end position="140"/>
    </location>
</feature>
<name>NUSB_STRR6</name>
<proteinExistence type="inferred from homology"/>
<gene>
    <name evidence="1" type="primary">nusB</name>
    <name type="ordered locus">spr0390</name>
</gene>
<accession>P65583</accession>
<accession>Q97SF0</accession>
<comment type="function">
    <text evidence="1">Involved in transcription antitermination. Required for transcription of ribosomal RNA (rRNA) genes. Binds specifically to the boxA antiterminator sequence of the ribosomal RNA (rrn) operons.</text>
</comment>
<comment type="similarity">
    <text evidence="1">Belongs to the NusB family.</text>
</comment>
<comment type="sequence caution" evidence="2">
    <conflict type="erroneous initiation">
        <sequence resource="EMBL-CDS" id="AAK99194"/>
    </conflict>
</comment>